<gene>
    <name evidence="1" type="primary">rplF</name>
    <name type="ordered locus">bll5385</name>
</gene>
<evidence type="ECO:0000255" key="1">
    <source>
        <dbReference type="HAMAP-Rule" id="MF_01365"/>
    </source>
</evidence>
<evidence type="ECO:0000305" key="2"/>
<name>RL6_BRADU</name>
<reference key="1">
    <citation type="journal article" date="2002" name="DNA Res.">
        <title>Complete genomic sequence of nitrogen-fixing symbiotic bacterium Bradyrhizobium japonicum USDA110.</title>
        <authorList>
            <person name="Kaneko T."/>
            <person name="Nakamura Y."/>
            <person name="Sato S."/>
            <person name="Minamisawa K."/>
            <person name="Uchiumi T."/>
            <person name="Sasamoto S."/>
            <person name="Watanabe A."/>
            <person name="Idesawa K."/>
            <person name="Iriguchi M."/>
            <person name="Kawashima K."/>
            <person name="Kohara M."/>
            <person name="Matsumoto M."/>
            <person name="Shimpo S."/>
            <person name="Tsuruoka H."/>
            <person name="Wada T."/>
            <person name="Yamada M."/>
            <person name="Tabata S."/>
        </authorList>
    </citation>
    <scope>NUCLEOTIDE SEQUENCE [LARGE SCALE GENOMIC DNA]</scope>
    <source>
        <strain>JCM 10833 / BCRC 13528 / IAM 13628 / NBRC 14792 / USDA 110</strain>
    </source>
</reference>
<keyword id="KW-1185">Reference proteome</keyword>
<keyword id="KW-0687">Ribonucleoprotein</keyword>
<keyword id="KW-0689">Ribosomal protein</keyword>
<keyword id="KW-0694">RNA-binding</keyword>
<keyword id="KW-0699">rRNA-binding</keyword>
<feature type="chain" id="PRO_0000260845" description="Large ribosomal subunit protein uL6">
    <location>
        <begin position="1"/>
        <end position="177"/>
    </location>
</feature>
<accession>Q89J99</accession>
<dbReference type="EMBL" id="BA000040">
    <property type="protein sequence ID" value="BAC50650.1"/>
    <property type="molecule type" value="Genomic_DNA"/>
</dbReference>
<dbReference type="RefSeq" id="NP_772025.1">
    <property type="nucleotide sequence ID" value="NC_004463.1"/>
</dbReference>
<dbReference type="RefSeq" id="WP_011088138.1">
    <property type="nucleotide sequence ID" value="NC_004463.1"/>
</dbReference>
<dbReference type="SMR" id="Q89J99"/>
<dbReference type="FunCoup" id="Q89J99">
    <property type="interactions" value="825"/>
</dbReference>
<dbReference type="STRING" id="224911.AAV28_24335"/>
<dbReference type="EnsemblBacteria" id="BAC50650">
    <property type="protein sequence ID" value="BAC50650"/>
    <property type="gene ID" value="BAC50650"/>
</dbReference>
<dbReference type="GeneID" id="46492383"/>
<dbReference type="KEGG" id="bja:bll5385"/>
<dbReference type="PATRIC" id="fig|224911.44.peg.5284"/>
<dbReference type="eggNOG" id="COG0097">
    <property type="taxonomic scope" value="Bacteria"/>
</dbReference>
<dbReference type="HOGENOM" id="CLU_065464_1_2_5"/>
<dbReference type="InParanoid" id="Q89J99"/>
<dbReference type="OrthoDB" id="9805007at2"/>
<dbReference type="PhylomeDB" id="Q89J99"/>
<dbReference type="Proteomes" id="UP000002526">
    <property type="component" value="Chromosome"/>
</dbReference>
<dbReference type="GO" id="GO:0022625">
    <property type="term" value="C:cytosolic large ribosomal subunit"/>
    <property type="evidence" value="ECO:0000318"/>
    <property type="project" value="GO_Central"/>
</dbReference>
<dbReference type="GO" id="GO:0019843">
    <property type="term" value="F:rRNA binding"/>
    <property type="evidence" value="ECO:0007669"/>
    <property type="project" value="UniProtKB-UniRule"/>
</dbReference>
<dbReference type="GO" id="GO:0003735">
    <property type="term" value="F:structural constituent of ribosome"/>
    <property type="evidence" value="ECO:0000318"/>
    <property type="project" value="GO_Central"/>
</dbReference>
<dbReference type="GO" id="GO:0002181">
    <property type="term" value="P:cytoplasmic translation"/>
    <property type="evidence" value="ECO:0000318"/>
    <property type="project" value="GO_Central"/>
</dbReference>
<dbReference type="FunFam" id="3.90.930.12:FF:000001">
    <property type="entry name" value="50S ribosomal protein L6"/>
    <property type="match status" value="1"/>
</dbReference>
<dbReference type="FunFam" id="3.90.930.12:FF:000002">
    <property type="entry name" value="50S ribosomal protein L6"/>
    <property type="match status" value="1"/>
</dbReference>
<dbReference type="Gene3D" id="3.90.930.12">
    <property type="entry name" value="Ribosomal protein L6, alpha-beta domain"/>
    <property type="match status" value="2"/>
</dbReference>
<dbReference type="HAMAP" id="MF_01365_B">
    <property type="entry name" value="Ribosomal_uL6_B"/>
    <property type="match status" value="1"/>
</dbReference>
<dbReference type="InterPro" id="IPR000702">
    <property type="entry name" value="Ribosomal_uL6-like"/>
</dbReference>
<dbReference type="InterPro" id="IPR036789">
    <property type="entry name" value="Ribosomal_uL6-like_a/b-dom_sf"/>
</dbReference>
<dbReference type="InterPro" id="IPR020040">
    <property type="entry name" value="Ribosomal_uL6_a/b-dom"/>
</dbReference>
<dbReference type="InterPro" id="IPR019906">
    <property type="entry name" value="Ribosomal_uL6_bac-type"/>
</dbReference>
<dbReference type="InterPro" id="IPR002358">
    <property type="entry name" value="Ribosomal_uL6_CS"/>
</dbReference>
<dbReference type="NCBIfam" id="TIGR03654">
    <property type="entry name" value="L6_bact"/>
    <property type="match status" value="1"/>
</dbReference>
<dbReference type="PANTHER" id="PTHR11655">
    <property type="entry name" value="60S/50S RIBOSOMAL PROTEIN L6/L9"/>
    <property type="match status" value="1"/>
</dbReference>
<dbReference type="PANTHER" id="PTHR11655:SF14">
    <property type="entry name" value="LARGE RIBOSOMAL SUBUNIT PROTEIN UL6M"/>
    <property type="match status" value="1"/>
</dbReference>
<dbReference type="Pfam" id="PF00347">
    <property type="entry name" value="Ribosomal_L6"/>
    <property type="match status" value="2"/>
</dbReference>
<dbReference type="PIRSF" id="PIRSF002162">
    <property type="entry name" value="Ribosomal_L6"/>
    <property type="match status" value="1"/>
</dbReference>
<dbReference type="PRINTS" id="PR00059">
    <property type="entry name" value="RIBOSOMALL6"/>
</dbReference>
<dbReference type="SUPFAM" id="SSF56053">
    <property type="entry name" value="Ribosomal protein L6"/>
    <property type="match status" value="2"/>
</dbReference>
<dbReference type="PROSITE" id="PS00525">
    <property type="entry name" value="RIBOSOMAL_L6_1"/>
    <property type="match status" value="1"/>
</dbReference>
<organism>
    <name type="scientific">Bradyrhizobium diazoefficiens (strain JCM 10833 / BCRC 13528 / IAM 13628 / NBRC 14792 / USDA 110)</name>
    <dbReference type="NCBI Taxonomy" id="224911"/>
    <lineage>
        <taxon>Bacteria</taxon>
        <taxon>Pseudomonadati</taxon>
        <taxon>Pseudomonadota</taxon>
        <taxon>Alphaproteobacteria</taxon>
        <taxon>Hyphomicrobiales</taxon>
        <taxon>Nitrobacteraceae</taxon>
        <taxon>Bradyrhizobium</taxon>
    </lineage>
</organism>
<proteinExistence type="inferred from homology"/>
<comment type="function">
    <text evidence="1">This protein binds to the 23S rRNA, and is important in its secondary structure. It is located near the subunit interface in the base of the L7/L12 stalk, and near the tRNA binding site of the peptidyltransferase center.</text>
</comment>
<comment type="subunit">
    <text evidence="1">Part of the 50S ribosomal subunit.</text>
</comment>
<comment type="similarity">
    <text evidence="1">Belongs to the universal ribosomal protein uL6 family.</text>
</comment>
<sequence>MSRVGKRPVAVPSGVTATVDGQTVKMKGPKGQLQFVVHDDVEVKLESGQIKVKPRLETNRARALYGTARAQVANLVEGVTKGFEKKLEITGVGYRAAMQGKNLQLALGYSHDVIYTIPEGITITVPKPTEITVTGSDIQRVGQVAAEIRSYRPPEPYKGKGVKYVGEFIFRKEGKKK</sequence>
<protein>
    <recommendedName>
        <fullName evidence="1">Large ribosomal subunit protein uL6</fullName>
    </recommendedName>
    <alternativeName>
        <fullName evidence="2">50S ribosomal protein L6</fullName>
    </alternativeName>
</protein>